<organismHost>
    <name type="scientific">Aves</name>
    <dbReference type="NCBI Taxonomy" id="8782"/>
</organismHost>
<organismHost>
    <name type="scientific">Homo sapiens</name>
    <name type="common">Human</name>
    <dbReference type="NCBI Taxonomy" id="9606"/>
</organismHost>
<organismHost>
    <name type="scientific">Sus scrofa</name>
    <name type="common">Pig</name>
    <dbReference type="NCBI Taxonomy" id="9823"/>
</organismHost>
<name>M2_I34A1</name>
<accession>P06821</accession>
<accession>A4GXH7</accession>
<accession>Q20N37</accession>
<accession>Q5UAV4</accession>
<accession>Q5UAV5</accession>
<accession>Q5UAV6</accession>
<accession>Q84105</accession>
<accession>Q8JUU3</accession>
<sequence>MSLLTEVETPIRNEWGCRCNGSSDPLAIAANIIGILHLILWILDRLFFKCIYRRFKYGLKGGPSTEGVPKSMREEYRKEQQSAVDADDGHFVSIELE</sequence>
<evidence type="ECO:0000255" key="1">
    <source>
        <dbReference type="HAMAP-Rule" id="MF_04069"/>
    </source>
</evidence>
<evidence type="ECO:0000256" key="2">
    <source>
        <dbReference type="SAM" id="MobiDB-lite"/>
    </source>
</evidence>
<evidence type="ECO:0007829" key="3">
    <source>
        <dbReference type="PDB" id="5DLM"/>
    </source>
</evidence>
<protein>
    <recommendedName>
        <fullName evidence="1">Matrix protein 2</fullName>
    </recommendedName>
    <alternativeName>
        <fullName evidence="1">Proton channel protein M2</fullName>
    </alternativeName>
</protein>
<gene>
    <name evidence="1" type="primary">M</name>
</gene>
<organism>
    <name type="scientific">Influenza A virus (strain A/Puerto Rico/8/1934 H1N1)</name>
    <dbReference type="NCBI Taxonomy" id="211044"/>
    <lineage>
        <taxon>Viruses</taxon>
        <taxon>Riboviria</taxon>
        <taxon>Orthornavirae</taxon>
        <taxon>Negarnaviricota</taxon>
        <taxon>Polyploviricotina</taxon>
        <taxon>Insthoviricetes</taxon>
        <taxon>Articulavirales</taxon>
        <taxon>Orthomyxoviridae</taxon>
        <taxon>Alphainfluenzavirus</taxon>
        <taxon>Alphainfluenzavirus influenzae</taxon>
        <taxon>Influenza A virus</taxon>
    </lineage>
</organism>
<feature type="chain" id="PRO_0000078890" description="Matrix protein 2">
    <location>
        <begin position="1"/>
        <end position="97"/>
    </location>
</feature>
<feature type="topological domain" description="Virion surface" evidence="1">
    <location>
        <begin position="1"/>
        <end position="22"/>
    </location>
</feature>
<feature type="transmembrane region" description="Helical; Signal-anchor for type III membrane protein" evidence="1">
    <location>
        <begin position="23"/>
        <end position="43"/>
    </location>
</feature>
<feature type="topological domain" description="Intravirion" evidence="1">
    <location>
        <begin position="44"/>
        <end position="97"/>
    </location>
</feature>
<feature type="region of interest" description="Disordered" evidence="2">
    <location>
        <begin position="59"/>
        <end position="88"/>
    </location>
</feature>
<feature type="compositionally biased region" description="Basic and acidic residues" evidence="2">
    <location>
        <begin position="71"/>
        <end position="80"/>
    </location>
</feature>
<feature type="site" description="Essential for channel activity, possibly by being protonated during channel activation, and by forming the channel gate and the selective filter" evidence="1">
    <location>
        <position position="37"/>
    </location>
</feature>
<feature type="site" description="Seems to be involved in pH gating" evidence="1">
    <location>
        <position position="41"/>
    </location>
</feature>
<feature type="modified residue" description="Phosphoserine; by host" evidence="1">
    <location>
        <position position="64"/>
    </location>
</feature>
<feature type="modified residue" description="Phosphoserine; by host" evidence="1">
    <location>
        <position position="82"/>
    </location>
</feature>
<feature type="modified residue" description="Phosphoserine; by host" evidence="1">
    <location>
        <position position="93"/>
    </location>
</feature>
<feature type="lipid moiety-binding region" description="S-palmitoyl cysteine; by host" evidence="1">
    <location>
        <position position="50"/>
    </location>
</feature>
<feature type="glycosylation site" description="N-linked (GlcNAc...) asparagine; by host" evidence="1">
    <location>
        <position position="20"/>
    </location>
</feature>
<feature type="disulfide bond" description="Interchain (with C-17)" evidence="1">
    <location>
        <position position="17"/>
    </location>
</feature>
<feature type="disulfide bond" description="Interchain (with C-19)" evidence="1">
    <location>
        <position position="19"/>
    </location>
</feature>
<feature type="sequence variant" description="In strain: A/Puerto Rico/8/34/Mount Sinai/Wi-M2-P10H.">
    <original>P</original>
    <variation>H</variation>
    <location>
        <position position="10"/>
    </location>
</feature>
<feature type="sequence variant" description="In strain: A/Puerto Rico/8/34/Mount Sinai/Wi-M2-P10L.">
    <original>P</original>
    <variation>L</variation>
    <location>
        <position position="10"/>
    </location>
</feature>
<feature type="sequence variant" description="In strain: A/Puerto Rico/8/34/Mount Sinai/Wi, A/Puerto Rico/8/34/Mount Sinai/Wi-M2-P10L and A/Puerto Rico/8/34/Mount Sinai/Wi-M2-P10H.">
    <original>A</original>
    <variation>T</variation>
    <location>
        <position position="27"/>
    </location>
</feature>
<feature type="sequence variant" description="In strain: A/Puerto Rico/8/34/Mount Sinai/Wi, A/Puerto Rico/8/34/Mount Sinai/Wi-M2-P10L and A/Puerto Rico/8/34/Mount Sinai/Wi-M2-P10H.">
    <original>I</original>
    <variation>T</variation>
    <location>
        <position position="39"/>
    </location>
</feature>
<feature type="sequence conflict" description="In Ref. 5; ABD77677." ref="5">
    <original>A</original>
    <variation>I</variation>
    <location>
        <position position="27"/>
    </location>
</feature>
<feature type="sequence conflict" description="In Ref. 5; ABD77677." ref="5">
    <original>A</original>
    <variation>S</variation>
    <location>
        <position position="30"/>
    </location>
</feature>
<feature type="sequence conflict" description="In Ref. 5; ABD77677." ref="5">
    <original>R</original>
    <variation>L</variation>
    <location>
        <position position="54"/>
    </location>
</feature>
<feature type="sequence conflict" description="In Ref. 5; ABD77677." ref="5">
    <original>G</original>
    <variation>R</variation>
    <location>
        <position position="61"/>
    </location>
</feature>
<feature type="sequence conflict" description="In Ref. 5; ABD77677." ref="5">
    <original>R</original>
    <variation>Q</variation>
    <location>
        <position position="77"/>
    </location>
</feature>
<feature type="turn" evidence="3">
    <location>
        <begin position="3"/>
        <end position="5"/>
    </location>
</feature>
<feature type="strand" evidence="3">
    <location>
        <begin position="6"/>
        <end position="8"/>
    </location>
</feature>
<proteinExistence type="evidence at protein level"/>
<reference key="1">
    <citation type="journal article" date="1980" name="Nucleic Acids Res.">
        <title>Cloning of influenza cDNA into M13: the sequence of the RNA segment encoding the A/PR/8/34 matrix protein.</title>
        <authorList>
            <person name="Winter G."/>
            <person name="Fields S."/>
        </authorList>
    </citation>
    <scope>NUCLEOTIDE SEQUENCE [GENOMIC RNA]</scope>
</reference>
<reference key="2">
    <citation type="journal article" date="2001" name="Philos. Trans. R. Soc. Lond., B, Biol. Sci.">
        <title>Plasmid-only rescue of influenza A virus vaccine candidates.</title>
        <authorList>
            <person name="Schickli J.H."/>
            <person name="Flandorfer A."/>
            <person name="Nakaya T."/>
            <person name="Martinez-Sobrido L."/>
            <person name="Garcia-Sastre A."/>
            <person name="Palese P."/>
        </authorList>
    </citation>
    <scope>NUCLEOTIDE SEQUENCE [GENOMIC RNA]</scope>
</reference>
<reference key="3">
    <citation type="journal article" date="2004" name="Virus Res.">
        <title>Efficient generation and growth of influenza virus A/PR/8/34 from eight cDNA fragments.</title>
        <authorList>
            <person name="de Wit E."/>
            <person name="Spronken M.I.J."/>
            <person name="Bestebroer T.M."/>
            <person name="Rimmelzwaan G.F."/>
            <person name="Osterhaus A.D.M.E."/>
            <person name="Fouchier R.A.M."/>
        </authorList>
    </citation>
    <scope>NUCLEOTIDE SEQUENCE [GENOMIC RNA]</scope>
    <scope>REVERSE GENETICS</scope>
</reference>
<reference key="4">
    <citation type="journal article" date="2005" name="J. Virol.">
        <title>Influenza type a virus escape mutants emerge in vivo in the presence of antibodies to the ectodomain of matrix protein 2.</title>
        <authorList>
            <person name="Zharikova D."/>
            <person name="Mozdzanowska K."/>
            <person name="Feng J."/>
            <person name="Zhang M."/>
            <person name="Gerhard W."/>
        </authorList>
    </citation>
    <scope>NUCLEOTIDE SEQUENCE [MRNA]</scope>
    <source>
        <strain>A/Puerto Rico/8/34/Mount Sinai/Wi</strain>
        <strain>A/Puerto Rico/8/34/Mount Sinai/Wi-M2-P10H</strain>
        <strain>A/Puerto Rico/8/34/Mount Sinai/Wi-M2-P10L</strain>
    </source>
</reference>
<reference key="5">
    <citation type="submission" date="2006-03" db="EMBL/GenBank/DDBJ databases">
        <title>The NIAID influenza genome sequencing project.</title>
        <authorList>
            <person name="Ghedin E."/>
            <person name="Spiro D."/>
            <person name="Miller N."/>
            <person name="Zaborsky J."/>
            <person name="Feldblyum T."/>
            <person name="Subbu V."/>
            <person name="Shumway M."/>
            <person name="Sparenborg J."/>
            <person name="Groveman L."/>
            <person name="Halpin R."/>
            <person name="Sitz J."/>
            <person name="Koo H."/>
            <person name="Salzberg S.L."/>
            <person name="Webster R.G."/>
            <person name="Hoffmann E."/>
            <person name="Krauss S."/>
            <person name="Naeve C."/>
            <person name="Bao Y."/>
            <person name="Bolotov P."/>
            <person name="Dernovoy D."/>
            <person name="Kiryutin B."/>
            <person name="Lipman D.J."/>
            <person name="Tatusova T."/>
        </authorList>
    </citation>
    <scope>NUCLEOTIDE SEQUENCE [GENOMIC RNA]</scope>
</reference>
<reference key="6">
    <citation type="journal article" date="2004" name="Virus Res.">
        <title>Assembly and budding of influenza virus.</title>
        <authorList>
            <person name="Nayak D.P."/>
            <person name="Hui E.K."/>
            <person name="Barman S."/>
        </authorList>
    </citation>
    <scope>REVIEW</scope>
</reference>
<reference key="7">
    <citation type="journal article" date="2003" name="FEBS Lett.">
        <title>Proton conduction through the M2 protein of the influenza A virus; a quantitative, mechanistic analysis of experimental data.</title>
        <authorList>
            <person name="Lear J.D."/>
        </authorList>
    </citation>
    <scope>REVIEW</scope>
</reference>
<reference key="8">
    <citation type="journal article" date="2003" name="FEBS Lett.">
        <title>Computational studies of proton transport through the M2 channel.</title>
        <authorList>
            <person name="Wu Y."/>
            <person name="Voth G.A."/>
        </authorList>
    </citation>
    <scope>REVIEW</scope>
</reference>
<comment type="function">
    <text evidence="1">Forms a proton-selective ion channel that is necessary for the efficient release of the viral genome during virus entry. After attaching to the cell surface, the virion enters the cell by endocytosis. Acidification of the endosome triggers M2 ion channel activity. The influx of protons into virion interior is believed to disrupt interactions between the viral ribonucleoprotein (RNP), matrix protein 1 (M1), and lipid bilayers, thereby freeing the viral genome from interaction with viral proteins and enabling RNA segments to migrate to the host cell nucleus, where influenza virus RNA transcription and replication occur. Also plays a role in viral proteins secretory pathway. Elevates the intravesicular pH of normally acidic compartments, such as trans-Golgi network, preventing newly formed hemagglutinin from premature switching to the fusion-active conformation.</text>
</comment>
<comment type="activity regulation">
    <text>The M2 protein from most influenza A strains is inhibited by amantadine and rimantadine, resulting in viral uncoating incapacity. Emergence of amantadine-resistant variants is usually rapid.</text>
</comment>
<comment type="subunit">
    <text evidence="1">Homotetramer; composed of two disulfide-linked dimers held together by non-covalent interactions. May interact with matrix protein 1.</text>
</comment>
<comment type="interaction">
    <interactant intactId="EBI-2547404">
        <id>P06821</id>
    </interactant>
    <interactant intactId="EBI-2340132">
        <id>Q9UI10</id>
        <label>EIF2B4</label>
    </interactant>
    <organismsDiffer>true</organismsDiffer>
    <experiments>3</experiments>
</comment>
<comment type="interaction">
    <interactant intactId="EBI-2547404">
        <id>P06821</id>
    </interactant>
    <interactant intactId="EBI-1056377">
        <id>O75844</id>
        <label>ZMPSTE24</label>
    </interactant>
    <organismsDiffer>true</organismsDiffer>
    <experiments>2</experiments>
</comment>
<comment type="subcellular location">
    <subcellularLocation>
        <location evidence="1">Virion membrane</location>
    </subcellularLocation>
    <subcellularLocation>
        <location evidence="1">Host apical cell membrane</location>
        <topology evidence="1">Single-pass type III membrane protein</topology>
    </subcellularLocation>
    <text evidence="1">Abundantly expressed at the apical plasma membrane in infected polarized epithelial cells, in close proximity to budding and assembled virions. Minor component of virions (only 16-20 molecules/virion).</text>
</comment>
<comment type="alternative products">
    <event type="alternative splicing"/>
    <isoform>
        <id>P06821-1</id>
        <name>M2</name>
        <sequence type="displayed"/>
    </isoform>
    <isoform>
        <id>P03485-1</id>
        <name>M1</name>
        <sequence type="external"/>
    </isoform>
    <text>Only the first 9 residues are shared by the 2 isoforms.</text>
</comment>
<comment type="domain">
    <text evidence="1">Cytoplasmic tail plays an important role in virion assembly and morphogenesis.</text>
</comment>
<comment type="miscellaneous">
    <text evidence="1">When the channel is activated, one or more imidazole moieties of His-37 probably become bi-protonated.</text>
</comment>
<comment type="similarity">
    <text evidence="1">Belongs to the influenza viruses matrix protein M2 family.</text>
</comment>
<dbReference type="EMBL" id="V01099">
    <property type="protein sequence ID" value="CAA24283.1"/>
    <property type="status" value="ALT_SEQ"/>
    <property type="molecule type" value="Genomic_RNA"/>
</dbReference>
<dbReference type="EMBL" id="AF389121">
    <property type="protein sequence ID" value="AAM75162.1"/>
    <property type="molecule type" value="Genomic_RNA"/>
</dbReference>
<dbReference type="EMBL" id="EF467824">
    <property type="protein sequence ID" value="ABO21713.1"/>
    <property type="molecule type" value="Genomic_RNA"/>
</dbReference>
<dbReference type="EMBL" id="AY768951">
    <property type="protein sequence ID" value="AAV41244.1"/>
    <property type="molecule type" value="mRNA"/>
</dbReference>
<dbReference type="EMBL" id="AY768952">
    <property type="protein sequence ID" value="AAV41245.1"/>
    <property type="molecule type" value="mRNA"/>
</dbReference>
<dbReference type="EMBL" id="AY768953">
    <property type="protein sequence ID" value="AAV41246.1"/>
    <property type="molecule type" value="mRNA"/>
</dbReference>
<dbReference type="EMBL" id="CY009445">
    <property type="protein sequence ID" value="ABD77677.1"/>
    <property type="molecule type" value="Genomic_RNA"/>
</dbReference>
<dbReference type="RefSeq" id="NP_040979.2">
    <molecule id="P06821-1"/>
    <property type="nucleotide sequence ID" value="NC_002016.1"/>
</dbReference>
<dbReference type="PDB" id="5DLM">
    <property type="method" value="X-ray"/>
    <property type="resolution" value="2.20 A"/>
    <property type="chains" value="X/Y=2-24"/>
</dbReference>
<dbReference type="PDBsum" id="5DLM"/>
<dbReference type="SMR" id="P06821"/>
<dbReference type="ELM" id="P06821"/>
<dbReference type="IntAct" id="P06821">
    <property type="interactions" value="105"/>
</dbReference>
<dbReference type="BindingDB" id="P06821"/>
<dbReference type="ChEMBL" id="CHEMBL1932894"/>
<dbReference type="DrugCentral" id="P06821"/>
<dbReference type="GlyCosmos" id="P06821">
    <property type="glycosylation" value="1 site, No reported glycans"/>
</dbReference>
<dbReference type="ABCD" id="P06821">
    <property type="antibodies" value="10 sequenced antibodies"/>
</dbReference>
<dbReference type="KEGG" id="vg:956528"/>
<dbReference type="OrthoDB" id="20646at10239"/>
<dbReference type="Reactome" id="R-HSA-168255">
    <property type="pathway name" value="Influenza Infection"/>
</dbReference>
<dbReference type="Reactome" id="R-HSA-168275">
    <property type="pathway name" value="Entry of Influenza Virion into Host Cell via Endocytosis"/>
</dbReference>
<dbReference type="Reactome" id="R-HSA-168288">
    <property type="pathway name" value="Fusion of the Influenza Virion to the Host Cell Endosome"/>
</dbReference>
<dbReference type="Reactome" id="R-HSA-168298">
    <property type="pathway name" value="Release"/>
</dbReference>
<dbReference type="Reactome" id="R-HSA-168302">
    <property type="pathway name" value="Budding"/>
</dbReference>
<dbReference type="Reactome" id="R-HSA-168303">
    <property type="pathway name" value="Packaging of Eight RNA Segments"/>
</dbReference>
<dbReference type="Reactome" id="R-HSA-168316">
    <property type="pathway name" value="Assembly of Viral Components at the Budding Site"/>
</dbReference>
<dbReference type="Reactome" id="R-HSA-168336">
    <property type="pathway name" value="Uncoating of the Influenza Virion"/>
</dbReference>
<dbReference type="Reactome" id="R-HSA-168874">
    <property type="pathway name" value="Transport of HA trimer, NA tetramer and M2 tetramer from the endoplasmic reticulum to the Golgi Apparatus"/>
</dbReference>
<dbReference type="Reactome" id="R-HSA-192823">
    <property type="pathway name" value="Viral mRNA Translation"/>
</dbReference>
<dbReference type="EvolutionaryTrace" id="P06821"/>
<dbReference type="Proteomes" id="UP000009255">
    <property type="component" value="Genome"/>
</dbReference>
<dbReference type="Proteomes" id="UP000116373">
    <property type="component" value="Genome"/>
</dbReference>
<dbReference type="Proteomes" id="UP000170967">
    <property type="component" value="Genome"/>
</dbReference>
<dbReference type="GO" id="GO:0005576">
    <property type="term" value="C:extracellular region"/>
    <property type="evidence" value="ECO:0000304"/>
    <property type="project" value="Reactome"/>
</dbReference>
<dbReference type="GO" id="GO:0020002">
    <property type="term" value="C:host cell plasma membrane"/>
    <property type="evidence" value="ECO:0007669"/>
    <property type="project" value="UniProtKB-SubCell"/>
</dbReference>
<dbReference type="GO" id="GO:0005886">
    <property type="term" value="C:plasma membrane"/>
    <property type="evidence" value="ECO:0000304"/>
    <property type="project" value="Reactome"/>
</dbReference>
<dbReference type="GO" id="GO:0055036">
    <property type="term" value="C:virion membrane"/>
    <property type="evidence" value="ECO:0007669"/>
    <property type="project" value="UniProtKB-SubCell"/>
</dbReference>
<dbReference type="GO" id="GO:0005216">
    <property type="term" value="F:monoatomic ion channel activity"/>
    <property type="evidence" value="ECO:0007669"/>
    <property type="project" value="UniProtKB-UniRule"/>
</dbReference>
<dbReference type="GO" id="GO:0015078">
    <property type="term" value="F:proton transmembrane transporter activity"/>
    <property type="evidence" value="ECO:0000304"/>
    <property type="project" value="Reactome"/>
</dbReference>
<dbReference type="GO" id="GO:0051259">
    <property type="term" value="P:protein complex oligomerization"/>
    <property type="evidence" value="ECO:0007669"/>
    <property type="project" value="UniProtKB-UniRule"/>
</dbReference>
<dbReference type="GO" id="GO:0044694">
    <property type="term" value="P:symbiont genome entry into host cell via pore formation in plasma membrane"/>
    <property type="evidence" value="ECO:0007669"/>
    <property type="project" value="UniProtKB-UniRule"/>
</dbReference>
<dbReference type="GO" id="GO:0140321">
    <property type="term" value="P:symbiont-mediated suppression of host autophagy"/>
    <property type="evidence" value="ECO:0007669"/>
    <property type="project" value="UniProtKB-KW"/>
</dbReference>
<dbReference type="GO" id="GO:0019061">
    <property type="term" value="P:uncoating of virus"/>
    <property type="evidence" value="ECO:0000304"/>
    <property type="project" value="Reactome"/>
</dbReference>
<dbReference type="Gene3D" id="6.10.250.1640">
    <property type="match status" value="1"/>
</dbReference>
<dbReference type="HAMAP" id="MF_04069">
    <property type="entry name" value="INFV_M2"/>
    <property type="match status" value="1"/>
</dbReference>
<dbReference type="InterPro" id="IPR002089">
    <property type="entry name" value="Flu_M2"/>
</dbReference>
<dbReference type="Pfam" id="PF00599">
    <property type="entry name" value="Flu_M2"/>
    <property type="match status" value="1"/>
</dbReference>
<keyword id="KW-0002">3D-structure</keyword>
<keyword id="KW-0025">Alternative splicing</keyword>
<keyword id="KW-1015">Disulfide bond</keyword>
<keyword id="KW-0325">Glycoprotein</keyword>
<keyword id="KW-1032">Host cell membrane</keyword>
<keyword id="KW-1043">Host membrane</keyword>
<keyword id="KW-0945">Host-virus interaction</keyword>
<keyword id="KW-0375">Hydrogen ion transport</keyword>
<keyword id="KW-1083">Inhibition of host autophagy by virus</keyword>
<keyword id="KW-0407">Ion channel</keyword>
<keyword id="KW-0406">Ion transport</keyword>
<keyword id="KW-0449">Lipoprotein</keyword>
<keyword id="KW-0472">Membrane</keyword>
<keyword id="KW-0564">Palmitate</keyword>
<keyword id="KW-0597">Phosphoprotein</keyword>
<keyword id="KW-1185">Reference proteome</keyword>
<keyword id="KW-0735">Signal-anchor</keyword>
<keyword id="KW-0812">Transmembrane</keyword>
<keyword id="KW-1133">Transmembrane helix</keyword>
<keyword id="KW-0813">Transport</keyword>
<keyword id="KW-1182">Viral ion channel</keyword>
<keyword id="KW-0946">Virion</keyword>